<gene>
    <name type="primary">hisC1</name>
    <name type="ordered locus">AF_2002</name>
</gene>
<reference key="1">
    <citation type="journal article" date="1997" name="Nature">
        <title>The complete genome sequence of the hyperthermophilic, sulphate-reducing archaeon Archaeoglobus fulgidus.</title>
        <authorList>
            <person name="Klenk H.-P."/>
            <person name="Clayton R.A."/>
            <person name="Tomb J.-F."/>
            <person name="White O."/>
            <person name="Nelson K.E."/>
            <person name="Ketchum K.A."/>
            <person name="Dodson R.J."/>
            <person name="Gwinn M.L."/>
            <person name="Hickey E.K."/>
            <person name="Peterson J.D."/>
            <person name="Richardson D.L."/>
            <person name="Kerlavage A.R."/>
            <person name="Graham D.E."/>
            <person name="Kyrpides N.C."/>
            <person name="Fleischmann R.D."/>
            <person name="Quackenbush J."/>
            <person name="Lee N.H."/>
            <person name="Sutton G.G."/>
            <person name="Gill S.R."/>
            <person name="Kirkness E.F."/>
            <person name="Dougherty B.A."/>
            <person name="McKenney K."/>
            <person name="Adams M.D."/>
            <person name="Loftus B.J."/>
            <person name="Peterson S.N."/>
            <person name="Reich C.I."/>
            <person name="McNeil L.K."/>
            <person name="Badger J.H."/>
            <person name="Glodek A."/>
            <person name="Zhou L."/>
            <person name="Overbeek R."/>
            <person name="Gocayne J.D."/>
            <person name="Weidman J.F."/>
            <person name="McDonald L.A."/>
            <person name="Utterback T.R."/>
            <person name="Cotton M.D."/>
            <person name="Spriggs T."/>
            <person name="Artiach P."/>
            <person name="Kaine B.P."/>
            <person name="Sykes S.M."/>
            <person name="Sadow P.W."/>
            <person name="D'Andrea K.P."/>
            <person name="Bowman C."/>
            <person name="Fujii C."/>
            <person name="Garland S.A."/>
            <person name="Mason T.M."/>
            <person name="Olsen G.J."/>
            <person name="Fraser C.M."/>
            <person name="Smith H.O."/>
            <person name="Woese C.R."/>
            <person name="Venter J.C."/>
        </authorList>
    </citation>
    <scope>NUCLEOTIDE SEQUENCE [LARGE SCALE GENOMIC DNA]</scope>
    <source>
        <strain>ATCC 49558 / DSM 4304 / JCM 9628 / NBRC 100126 / VC-16</strain>
    </source>
</reference>
<evidence type="ECO:0000250" key="1"/>
<evidence type="ECO:0000305" key="2"/>
<dbReference type="EC" id="2.6.1.9"/>
<dbReference type="EMBL" id="AE000782">
    <property type="protein sequence ID" value="AAB89251.1"/>
    <property type="molecule type" value="Genomic_DNA"/>
</dbReference>
<dbReference type="PIR" id="A69500">
    <property type="entry name" value="A69500"/>
</dbReference>
<dbReference type="SMR" id="O28277"/>
<dbReference type="STRING" id="224325.AF_2002"/>
<dbReference type="PaxDb" id="224325-AF_2002"/>
<dbReference type="EnsemblBacteria" id="AAB89251">
    <property type="protein sequence ID" value="AAB89251"/>
    <property type="gene ID" value="AF_2002"/>
</dbReference>
<dbReference type="KEGG" id="afu:AF_2002"/>
<dbReference type="eggNOG" id="arCOG04273">
    <property type="taxonomic scope" value="Archaea"/>
</dbReference>
<dbReference type="HOGENOM" id="CLU_017584_3_3_2"/>
<dbReference type="PhylomeDB" id="O28277"/>
<dbReference type="UniPathway" id="UPA00031">
    <property type="reaction ID" value="UER00012"/>
</dbReference>
<dbReference type="Proteomes" id="UP000002199">
    <property type="component" value="Chromosome"/>
</dbReference>
<dbReference type="GO" id="GO:0004400">
    <property type="term" value="F:histidinol-phosphate transaminase activity"/>
    <property type="evidence" value="ECO:0007669"/>
    <property type="project" value="UniProtKB-UniRule"/>
</dbReference>
<dbReference type="GO" id="GO:0030170">
    <property type="term" value="F:pyridoxal phosphate binding"/>
    <property type="evidence" value="ECO:0007669"/>
    <property type="project" value="InterPro"/>
</dbReference>
<dbReference type="GO" id="GO:0000105">
    <property type="term" value="P:L-histidine biosynthetic process"/>
    <property type="evidence" value="ECO:0007669"/>
    <property type="project" value="UniProtKB-UniRule"/>
</dbReference>
<dbReference type="CDD" id="cd00609">
    <property type="entry name" value="AAT_like"/>
    <property type="match status" value="1"/>
</dbReference>
<dbReference type="Gene3D" id="3.90.1150.10">
    <property type="entry name" value="Aspartate Aminotransferase, domain 1"/>
    <property type="match status" value="1"/>
</dbReference>
<dbReference type="Gene3D" id="3.40.640.10">
    <property type="entry name" value="Type I PLP-dependent aspartate aminotransferase-like (Major domain)"/>
    <property type="match status" value="1"/>
</dbReference>
<dbReference type="HAMAP" id="MF_01023">
    <property type="entry name" value="HisC_aminotrans_2"/>
    <property type="match status" value="1"/>
</dbReference>
<dbReference type="InterPro" id="IPR004839">
    <property type="entry name" value="Aminotransferase_I/II_large"/>
</dbReference>
<dbReference type="InterPro" id="IPR005861">
    <property type="entry name" value="HisP_aminotrans"/>
</dbReference>
<dbReference type="InterPro" id="IPR050106">
    <property type="entry name" value="HistidinolP_aminotransfase"/>
</dbReference>
<dbReference type="InterPro" id="IPR015424">
    <property type="entry name" value="PyrdxlP-dep_Trfase"/>
</dbReference>
<dbReference type="InterPro" id="IPR015421">
    <property type="entry name" value="PyrdxlP-dep_Trfase_major"/>
</dbReference>
<dbReference type="InterPro" id="IPR015422">
    <property type="entry name" value="PyrdxlP-dep_Trfase_small"/>
</dbReference>
<dbReference type="NCBIfam" id="TIGR01141">
    <property type="entry name" value="hisC"/>
    <property type="match status" value="1"/>
</dbReference>
<dbReference type="PANTHER" id="PTHR43643:SF6">
    <property type="entry name" value="HISTIDINOL-PHOSPHATE AMINOTRANSFERASE"/>
    <property type="match status" value="1"/>
</dbReference>
<dbReference type="PANTHER" id="PTHR43643">
    <property type="entry name" value="HISTIDINOL-PHOSPHATE AMINOTRANSFERASE 2"/>
    <property type="match status" value="1"/>
</dbReference>
<dbReference type="Pfam" id="PF00155">
    <property type="entry name" value="Aminotran_1_2"/>
    <property type="match status" value="1"/>
</dbReference>
<dbReference type="SUPFAM" id="SSF53383">
    <property type="entry name" value="PLP-dependent transferases"/>
    <property type="match status" value="1"/>
</dbReference>
<name>HIS81_ARCFU</name>
<feature type="chain" id="PRO_0000153490" description="Histidinol-phosphate aminotransferase 1">
    <location>
        <begin position="1"/>
        <end position="319"/>
    </location>
</feature>
<feature type="modified residue" description="N6-(pyridoxal phosphate)lysine" evidence="1">
    <location>
        <position position="182"/>
    </location>
</feature>
<proteinExistence type="inferred from homology"/>
<accession>O28277</accession>
<comment type="catalytic activity">
    <reaction>
        <text>L-histidinol phosphate + 2-oxoglutarate = 3-(imidazol-4-yl)-2-oxopropyl phosphate + L-glutamate</text>
        <dbReference type="Rhea" id="RHEA:23744"/>
        <dbReference type="ChEBI" id="CHEBI:16810"/>
        <dbReference type="ChEBI" id="CHEBI:29985"/>
        <dbReference type="ChEBI" id="CHEBI:57766"/>
        <dbReference type="ChEBI" id="CHEBI:57980"/>
        <dbReference type="EC" id="2.6.1.9"/>
    </reaction>
</comment>
<comment type="cofactor">
    <cofactor evidence="1">
        <name>pyridoxal 5'-phosphate</name>
        <dbReference type="ChEBI" id="CHEBI:597326"/>
    </cofactor>
</comment>
<comment type="pathway">
    <text>Amino-acid biosynthesis; L-histidine biosynthesis; L-histidine from 5-phospho-alpha-D-ribose 1-diphosphate: step 7/9.</text>
</comment>
<comment type="similarity">
    <text evidence="2">Belongs to the class-II pyridoxal-phosphate-dependent aminotransferase family. Histidinol-phosphate aminotransferase subfamily.</text>
</comment>
<keyword id="KW-0028">Amino-acid biosynthesis</keyword>
<keyword id="KW-0032">Aminotransferase</keyword>
<keyword id="KW-0368">Histidine biosynthesis</keyword>
<keyword id="KW-0663">Pyridoxal phosphate</keyword>
<keyword id="KW-1185">Reference proteome</keyword>
<keyword id="KW-0808">Transferase</keyword>
<protein>
    <recommendedName>
        <fullName>Histidinol-phosphate aminotransferase 1</fullName>
        <ecNumber>2.6.1.9</ecNumber>
    </recommendedName>
    <alternativeName>
        <fullName>Imidazole acetol-phosphate transaminase 1</fullName>
    </alternativeName>
</protein>
<sequence>MVKLASNENPYGPSPKAIEAFRSYSDLHIYPNPEYRELREKISDYTGWDADRVVVGAGIDGILETLFRILIDEGDEVVIPIPTFPYYHILTKLSCGKEVLVRRGENYRIDESIFDAITQKTKIILICNPNNPTGNAEDAKLIEELVNSTNALIFLDEAYVEFSDVSFSVDAENVVIARTFSKAFGLANLRIGYALLPEWLVSPFRAAMTPFPLSTPAAKAAEAALDDVEWMRSCVGRIKAERERLYKELKKLVEVNLSQANFLFFESPVENLAEELLKRGVIVRDCSSFVGCGNHIRVTVGRPEENDMFLEALKEVLGC</sequence>
<organism>
    <name type="scientific">Archaeoglobus fulgidus (strain ATCC 49558 / DSM 4304 / JCM 9628 / NBRC 100126 / VC-16)</name>
    <dbReference type="NCBI Taxonomy" id="224325"/>
    <lineage>
        <taxon>Archaea</taxon>
        <taxon>Methanobacteriati</taxon>
        <taxon>Methanobacteriota</taxon>
        <taxon>Archaeoglobi</taxon>
        <taxon>Archaeoglobales</taxon>
        <taxon>Archaeoglobaceae</taxon>
        <taxon>Archaeoglobus</taxon>
    </lineage>
</organism>